<name>RHG19_CHICK</name>
<dbReference type="EMBL" id="AJ851690">
    <property type="protein sequence ID" value="CAH65324.1"/>
    <property type="molecule type" value="mRNA"/>
</dbReference>
<dbReference type="RefSeq" id="NP_001012927.1">
    <property type="nucleotide sequence ID" value="NM_001012909.1"/>
</dbReference>
<dbReference type="SMR" id="Q5F3G0"/>
<dbReference type="FunCoup" id="Q5F3G0">
    <property type="interactions" value="823"/>
</dbReference>
<dbReference type="STRING" id="9031.ENSGALP00000054557"/>
<dbReference type="PaxDb" id="9031-ENSGALP00000032595"/>
<dbReference type="GeneID" id="423846"/>
<dbReference type="KEGG" id="gga:423846"/>
<dbReference type="CTD" id="84986"/>
<dbReference type="VEuPathDB" id="HostDB:geneid_423846"/>
<dbReference type="eggNOG" id="KOG1453">
    <property type="taxonomic scope" value="Eukaryota"/>
</dbReference>
<dbReference type="InParanoid" id="Q5F3G0"/>
<dbReference type="OrthoDB" id="10061772at2759"/>
<dbReference type="PhylomeDB" id="Q5F3G0"/>
<dbReference type="PRO" id="PR:Q5F3G0"/>
<dbReference type="Proteomes" id="UP000000539">
    <property type="component" value="Unassembled WGS sequence"/>
</dbReference>
<dbReference type="GO" id="GO:0005737">
    <property type="term" value="C:cytoplasm"/>
    <property type="evidence" value="ECO:0000318"/>
    <property type="project" value="GO_Central"/>
</dbReference>
<dbReference type="GO" id="GO:0005096">
    <property type="term" value="F:GTPase activator activity"/>
    <property type="evidence" value="ECO:0000318"/>
    <property type="project" value="GO_Central"/>
</dbReference>
<dbReference type="GO" id="GO:0051056">
    <property type="term" value="P:regulation of small GTPase mediated signal transduction"/>
    <property type="evidence" value="ECO:0000318"/>
    <property type="project" value="GO_Central"/>
</dbReference>
<dbReference type="GO" id="GO:0007165">
    <property type="term" value="P:signal transduction"/>
    <property type="evidence" value="ECO:0007669"/>
    <property type="project" value="InterPro"/>
</dbReference>
<dbReference type="CDD" id="cd04392">
    <property type="entry name" value="RhoGAP_ARHGAP19"/>
    <property type="match status" value="1"/>
</dbReference>
<dbReference type="FunFam" id="1.10.555.10:FF:000022">
    <property type="entry name" value="rho GTPase-activating protein 19"/>
    <property type="match status" value="1"/>
</dbReference>
<dbReference type="Gene3D" id="1.10.555.10">
    <property type="entry name" value="Rho GTPase activation protein"/>
    <property type="match status" value="1"/>
</dbReference>
<dbReference type="InterPro" id="IPR047941">
    <property type="entry name" value="ARHGAP19_RhoGAP"/>
</dbReference>
<dbReference type="InterPro" id="IPR008936">
    <property type="entry name" value="Rho_GTPase_activation_prot"/>
</dbReference>
<dbReference type="InterPro" id="IPR000198">
    <property type="entry name" value="RhoGAP_dom"/>
</dbReference>
<dbReference type="PANTHER" id="PTHR14963">
    <property type="entry name" value="RHO GTPASE ACTIVATING PROTEIN 18,19-RELATED"/>
    <property type="match status" value="1"/>
</dbReference>
<dbReference type="PANTHER" id="PTHR14963:SF7">
    <property type="entry name" value="RHO GTPASE-ACTIVATING PROTEIN 19"/>
    <property type="match status" value="1"/>
</dbReference>
<dbReference type="Pfam" id="PF00620">
    <property type="entry name" value="RhoGAP"/>
    <property type="match status" value="1"/>
</dbReference>
<dbReference type="SMART" id="SM00324">
    <property type="entry name" value="RhoGAP"/>
    <property type="match status" value="1"/>
</dbReference>
<dbReference type="SUPFAM" id="SSF48350">
    <property type="entry name" value="GTPase activation domain, GAP"/>
    <property type="match status" value="1"/>
</dbReference>
<dbReference type="PROSITE" id="PS50238">
    <property type="entry name" value="RHOGAP"/>
    <property type="match status" value="1"/>
</dbReference>
<gene>
    <name type="primary">ARHGAP19</name>
    <name type="ORF">RCJMB04_18c11</name>
</gene>
<comment type="function">
    <text evidence="1">GTPase activator for the Rho-type GTPases by converting them to an inactive GDP-bound state.</text>
</comment>
<protein>
    <recommendedName>
        <fullName>Rho GTPase-activating protein 19</fullName>
    </recommendedName>
    <alternativeName>
        <fullName>Rho-type GTPase-activating protein 19</fullName>
    </alternativeName>
</protein>
<sequence length="495" mass="55450">MAAGAPAAGARRGGSEAICNLVICNDSSLRSQPIIFNPDFFVEKLRHEKPEVFTELVVSNITRLIDLPGAELAQLMGEEDPKLPGANSTASGFFRSLMSLKRKEKGVVFGSPLTEEGIAQVSQLIEYLHKNLRAEGLFRVPGNSIRQQILKDALNSGTDIDLDSGEFHSNDVATLLKMFLGELPEPLLTHKHFHAHLKIADLTLFDEKGNKTSTPDKERQIEALQLLFLILPAPNRSLLKLLLDLLYQTAKKQDKNKMSAHNLALMFAPHILWPRNVTANDLQENITKLNNGVTFMIKHSQKLFKAPAYIRECARLHYLGSRAHTSKDDLDLLTSPGSKELQPLKSQKRSRLDSCHQEETQQRTEEALRELFRHVHNMPDSAKKKKLIRQFNKHPSALTPSSDVATPPAPRRARSRSFSGLIKRKVLGTPVIQERKSRDSTPEPKRVSKENVHLLQKCGSPAHMSQGKLKSLEGQKEESCRRMRAHLLSKDSSSL</sequence>
<reference key="1">
    <citation type="journal article" date="2005" name="Genome Biol.">
        <title>Full-length cDNAs from chicken bursal lymphocytes to facilitate gene function analysis.</title>
        <authorList>
            <person name="Caldwell R.B."/>
            <person name="Kierzek A.M."/>
            <person name="Arakawa H."/>
            <person name="Bezzubov Y."/>
            <person name="Zaim J."/>
            <person name="Fiedler P."/>
            <person name="Kutter S."/>
            <person name="Blagodatski A."/>
            <person name="Kostovska D."/>
            <person name="Koter M."/>
            <person name="Plachy J."/>
            <person name="Carninci P."/>
            <person name="Hayashizaki Y."/>
            <person name="Buerstedde J.-M."/>
        </authorList>
    </citation>
    <scope>NUCLEOTIDE SEQUENCE [LARGE SCALE MRNA]</scope>
    <source>
        <strain>CB</strain>
        <tissue>Bursa of Fabricius</tissue>
    </source>
</reference>
<keyword id="KW-0343">GTPase activation</keyword>
<keyword id="KW-1185">Reference proteome</keyword>
<accession>Q5F3G0</accession>
<organism>
    <name type="scientific">Gallus gallus</name>
    <name type="common">Chicken</name>
    <dbReference type="NCBI Taxonomy" id="9031"/>
    <lineage>
        <taxon>Eukaryota</taxon>
        <taxon>Metazoa</taxon>
        <taxon>Chordata</taxon>
        <taxon>Craniata</taxon>
        <taxon>Vertebrata</taxon>
        <taxon>Euteleostomi</taxon>
        <taxon>Archelosauria</taxon>
        <taxon>Archosauria</taxon>
        <taxon>Dinosauria</taxon>
        <taxon>Saurischia</taxon>
        <taxon>Theropoda</taxon>
        <taxon>Coelurosauria</taxon>
        <taxon>Aves</taxon>
        <taxon>Neognathae</taxon>
        <taxon>Galloanserae</taxon>
        <taxon>Galliformes</taxon>
        <taxon>Phasianidae</taxon>
        <taxon>Phasianinae</taxon>
        <taxon>Gallus</taxon>
    </lineage>
</organism>
<proteinExistence type="evidence at transcript level"/>
<feature type="chain" id="PRO_0000280467" description="Rho GTPase-activating protein 19">
    <location>
        <begin position="1"/>
        <end position="495"/>
    </location>
</feature>
<feature type="domain" description="Rho-GAP" evidence="2">
    <location>
        <begin position="98"/>
        <end position="304"/>
    </location>
</feature>
<feature type="region of interest" description="Disordered" evidence="3">
    <location>
        <begin position="327"/>
        <end position="362"/>
    </location>
</feature>
<feature type="region of interest" description="Disordered" evidence="3">
    <location>
        <begin position="393"/>
        <end position="495"/>
    </location>
</feature>
<feature type="compositionally biased region" description="Basic and acidic residues" evidence="3">
    <location>
        <begin position="350"/>
        <end position="362"/>
    </location>
</feature>
<feature type="compositionally biased region" description="Basic and acidic residues" evidence="3">
    <location>
        <begin position="433"/>
        <end position="452"/>
    </location>
</feature>
<feature type="compositionally biased region" description="Basic and acidic residues" evidence="3">
    <location>
        <begin position="470"/>
        <end position="481"/>
    </location>
</feature>
<feature type="site" description="Arginine finger; crucial for GTP hydrolysis by stabilizing the transition state" evidence="2">
    <location>
        <position position="139"/>
    </location>
</feature>
<evidence type="ECO:0000250" key="1"/>
<evidence type="ECO:0000255" key="2">
    <source>
        <dbReference type="PROSITE-ProRule" id="PRU00172"/>
    </source>
</evidence>
<evidence type="ECO:0000256" key="3">
    <source>
        <dbReference type="SAM" id="MobiDB-lite"/>
    </source>
</evidence>